<reference key="1">
    <citation type="journal article" date="2010" name="Biochimie">
        <title>Astacin-like metalloproteases are a gene family of toxins present in the venom of different species of the brown spider (genus Loxosceles).</title>
        <authorList>
            <person name="Trevisan-Silva D."/>
            <person name="Gremski L.H."/>
            <person name="Chaim O.M."/>
            <person name="da Silveira R.B."/>
            <person name="Meissner G.O."/>
            <person name="Mangili O.C."/>
            <person name="Barbaro K.C."/>
            <person name="Gremski W."/>
            <person name="Veiga S.S."/>
            <person name="Senff-Ribeiro A."/>
        </authorList>
    </citation>
    <scope>NUCLEOTIDE SEQUENCE [MRNA]</scope>
    <source>
        <tissue>Venom gland</tissue>
    </source>
</reference>
<comment type="function">
    <text evidence="1">Zinc metalloprotease. Provoques deadhesion of endothelial cells from cell cultures, and also degradation of fibronectin, fibrinogen and gelatin in vitro. Its role in the venom is not fully understood but it might act as a spreading factor that facilitates diffusion of other venom toxins. Alternatively, it might be involved in the proteolytic processing of other venom toxins or it might play a role in extra-oral digestion of prey (By similarity).</text>
</comment>
<comment type="cofactor">
    <cofactor evidence="4">
        <name>Zn(2+)</name>
        <dbReference type="ChEBI" id="CHEBI:29105"/>
    </cofactor>
    <text evidence="4">Binds 1 zinc ion per subunit.</text>
</comment>
<comment type="activity regulation">
    <text evidence="1">Inhibited by 1,10-phenanthroline.</text>
</comment>
<comment type="subunit">
    <text evidence="1">Monomer.</text>
</comment>
<comment type="subcellular location">
    <subcellularLocation>
        <location evidence="1">Secreted</location>
    </subcellularLocation>
</comment>
<comment type="tissue specificity">
    <text>Expressed by the venom gland.</text>
</comment>
<dbReference type="EC" id="3.4.24.-"/>
<dbReference type="EMBL" id="GR277668">
    <property type="status" value="NOT_ANNOTATED_CDS"/>
    <property type="molecule type" value="mRNA"/>
</dbReference>
<dbReference type="SMR" id="P0DM62"/>
<dbReference type="GO" id="GO:0005576">
    <property type="term" value="C:extracellular region"/>
    <property type="evidence" value="ECO:0007669"/>
    <property type="project" value="UniProtKB-SubCell"/>
</dbReference>
<dbReference type="GO" id="GO:0004222">
    <property type="term" value="F:metalloendopeptidase activity"/>
    <property type="evidence" value="ECO:0007669"/>
    <property type="project" value="InterPro"/>
</dbReference>
<dbReference type="GO" id="GO:0090729">
    <property type="term" value="F:toxin activity"/>
    <property type="evidence" value="ECO:0007669"/>
    <property type="project" value="UniProtKB-KW"/>
</dbReference>
<dbReference type="GO" id="GO:0008270">
    <property type="term" value="F:zinc ion binding"/>
    <property type="evidence" value="ECO:0007669"/>
    <property type="project" value="InterPro"/>
</dbReference>
<dbReference type="GO" id="GO:0006508">
    <property type="term" value="P:proteolysis"/>
    <property type="evidence" value="ECO:0007669"/>
    <property type="project" value="UniProtKB-KW"/>
</dbReference>
<dbReference type="CDD" id="cd04280">
    <property type="entry name" value="ZnMc_astacin_like"/>
    <property type="match status" value="1"/>
</dbReference>
<dbReference type="Gene3D" id="3.40.390.10">
    <property type="entry name" value="Collagenase (Catalytic Domain)"/>
    <property type="match status" value="1"/>
</dbReference>
<dbReference type="InterPro" id="IPR034035">
    <property type="entry name" value="Astacin-like_dom"/>
</dbReference>
<dbReference type="InterPro" id="IPR024079">
    <property type="entry name" value="MetalloPept_cat_dom_sf"/>
</dbReference>
<dbReference type="InterPro" id="IPR001506">
    <property type="entry name" value="Peptidase_M12A"/>
</dbReference>
<dbReference type="InterPro" id="IPR006026">
    <property type="entry name" value="Peptidase_Metallo"/>
</dbReference>
<dbReference type="PANTHER" id="PTHR10127">
    <property type="entry name" value="DISCOIDIN, CUB, EGF, LAMININ , AND ZINC METALLOPROTEASE DOMAIN CONTAINING"/>
    <property type="match status" value="1"/>
</dbReference>
<dbReference type="PANTHER" id="PTHR10127:SF883">
    <property type="entry name" value="ZINC METALLOPROTEINASE NAS-8"/>
    <property type="match status" value="1"/>
</dbReference>
<dbReference type="Pfam" id="PF01400">
    <property type="entry name" value="Astacin"/>
    <property type="match status" value="1"/>
</dbReference>
<dbReference type="PRINTS" id="PR00480">
    <property type="entry name" value="ASTACIN"/>
</dbReference>
<dbReference type="SMART" id="SM00235">
    <property type="entry name" value="ZnMc"/>
    <property type="match status" value="1"/>
</dbReference>
<dbReference type="SUPFAM" id="SSF55486">
    <property type="entry name" value="Metalloproteases ('zincins'), catalytic domain"/>
    <property type="match status" value="1"/>
</dbReference>
<dbReference type="PROSITE" id="PS51864">
    <property type="entry name" value="ASTACIN"/>
    <property type="match status" value="1"/>
</dbReference>
<dbReference type="PROSITE" id="PS00142">
    <property type="entry name" value="ZINC_PROTEASE"/>
    <property type="match status" value="1"/>
</dbReference>
<organism>
    <name type="scientific">Loxosceles gaucho</name>
    <name type="common">Spider</name>
    <dbReference type="NCBI Taxonomy" id="58216"/>
    <lineage>
        <taxon>Eukaryota</taxon>
        <taxon>Metazoa</taxon>
        <taxon>Ecdysozoa</taxon>
        <taxon>Arthropoda</taxon>
        <taxon>Chelicerata</taxon>
        <taxon>Arachnida</taxon>
        <taxon>Araneae</taxon>
        <taxon>Araneomorphae</taxon>
        <taxon>Haplogynae</taxon>
        <taxon>Scytodoidea</taxon>
        <taxon>Sicariidae</taxon>
        <taxon>Loxosceles</taxon>
    </lineage>
</organism>
<accession>P0DM62</accession>
<keyword id="KW-1015">Disulfide bond</keyword>
<keyword id="KW-0325">Glycoprotein</keyword>
<keyword id="KW-0378">Hydrolase</keyword>
<keyword id="KW-0479">Metal-binding</keyword>
<keyword id="KW-0482">Metalloprotease</keyword>
<keyword id="KW-0645">Protease</keyword>
<keyword id="KW-0964">Secreted</keyword>
<keyword id="KW-0800">Toxin</keyword>
<keyword id="KW-0862">Zinc</keyword>
<name>VMPA5_LOXGA</name>
<sequence>NAVKYDQQLWPNGEIIYEISPGLRQYEQLILEAMRSYEDTTCIKFRRRFDEDDYVNIHVGDKCYSRVGKSFKGGPQPLSLGNGCTDFGTILHELGHSVGFDHEHSRTDRDEYLIIHERNIKNGSEHNFEKLLESKTRTIGPFDYDSIMLYGSYAFSRDTEAVENHGTRRTRTPYEICHSKRKAELL</sequence>
<proteinExistence type="evidence at transcript level"/>
<feature type="chain" id="PRO_0000423641" description="Astacin-like metalloprotease toxin 5">
    <location>
        <begin position="1" status="less than"/>
        <end position="186" status="greater than"/>
    </location>
</feature>
<feature type="domain" description="Peptidase M12A" evidence="4">
    <location>
        <begin position="1"/>
        <end position="186" status="greater than"/>
    </location>
</feature>
<feature type="active site" evidence="4">
    <location>
        <position position="93"/>
    </location>
</feature>
<feature type="binding site" evidence="4">
    <location>
        <position position="92"/>
    </location>
    <ligand>
        <name>Zn(2+)</name>
        <dbReference type="ChEBI" id="CHEBI:29105"/>
        <note>catalytic</note>
    </ligand>
</feature>
<feature type="binding site" evidence="4">
    <location>
        <position position="96"/>
    </location>
    <ligand>
        <name>Zn(2+)</name>
        <dbReference type="ChEBI" id="CHEBI:29105"/>
        <note>catalytic</note>
    </ligand>
</feature>
<feature type="binding site" evidence="4">
    <location>
        <position position="102"/>
    </location>
    <ligand>
        <name>Zn(2+)</name>
        <dbReference type="ChEBI" id="CHEBI:29105"/>
        <note>catalytic</note>
    </ligand>
</feature>
<feature type="glycosylation site" description="N-linked (GlcNAc...) asparagine" evidence="3">
    <location>
        <position position="122"/>
    </location>
</feature>
<feature type="disulfide bond" evidence="2">
    <location>
        <begin position="42"/>
        <end position="177"/>
    </location>
</feature>
<feature type="disulfide bond" evidence="4">
    <location>
        <begin position="63"/>
        <end position="84"/>
    </location>
</feature>
<feature type="non-terminal residue">
    <location>
        <position position="1"/>
    </location>
</feature>
<feature type="non-terminal residue">
    <location>
        <position position="186"/>
    </location>
</feature>
<evidence type="ECO:0000250" key="1"/>
<evidence type="ECO:0000250" key="2">
    <source>
        <dbReference type="UniProtKB" id="P07584"/>
    </source>
</evidence>
<evidence type="ECO:0000255" key="3"/>
<evidence type="ECO:0000255" key="4">
    <source>
        <dbReference type="PROSITE-ProRule" id="PRU01211"/>
    </source>
</evidence>
<protein>
    <recommendedName>
        <fullName>Astacin-like metalloprotease toxin 5</fullName>
        <ecNumber>3.4.24.-</ecNumber>
    </recommendedName>
    <alternativeName>
        <fullName>Loxosceles astacin-like protease 5</fullName>
        <shortName>LALP5</shortName>
    </alternativeName>
</protein>